<feature type="chain" id="PRO_1000080546" description="Phosphoribosylformylglycinamidine synthase subunit PurL">
    <location>
        <begin position="1"/>
        <end position="735"/>
    </location>
</feature>
<feature type="active site" evidence="1">
    <location>
        <position position="49"/>
    </location>
</feature>
<feature type="active site" description="Proton acceptor" evidence="1">
    <location>
        <position position="95"/>
    </location>
</feature>
<feature type="binding site" evidence="1">
    <location>
        <position position="52"/>
    </location>
    <ligand>
        <name>ATP</name>
        <dbReference type="ChEBI" id="CHEBI:30616"/>
    </ligand>
</feature>
<feature type="binding site" evidence="1">
    <location>
        <position position="91"/>
    </location>
    <ligand>
        <name>ATP</name>
        <dbReference type="ChEBI" id="CHEBI:30616"/>
    </ligand>
</feature>
<feature type="binding site" evidence="1">
    <location>
        <position position="93"/>
    </location>
    <ligand>
        <name>Mg(2+)</name>
        <dbReference type="ChEBI" id="CHEBI:18420"/>
        <label>1</label>
    </ligand>
</feature>
<feature type="binding site" evidence="1">
    <location>
        <begin position="94"/>
        <end position="97"/>
    </location>
    <ligand>
        <name>substrate</name>
    </ligand>
</feature>
<feature type="binding site" evidence="1">
    <location>
        <position position="116"/>
    </location>
    <ligand>
        <name>substrate</name>
    </ligand>
</feature>
<feature type="binding site" evidence="1">
    <location>
        <position position="117"/>
    </location>
    <ligand>
        <name>Mg(2+)</name>
        <dbReference type="ChEBI" id="CHEBI:18420"/>
        <label>2</label>
    </ligand>
</feature>
<feature type="binding site" evidence="1">
    <location>
        <position position="240"/>
    </location>
    <ligand>
        <name>substrate</name>
    </ligand>
</feature>
<feature type="binding site" evidence="1">
    <location>
        <position position="268"/>
    </location>
    <ligand>
        <name>Mg(2+)</name>
        <dbReference type="ChEBI" id="CHEBI:18420"/>
        <label>2</label>
    </ligand>
</feature>
<feature type="binding site" evidence="1">
    <location>
        <begin position="312"/>
        <end position="314"/>
    </location>
    <ligand>
        <name>substrate</name>
    </ligand>
</feature>
<feature type="binding site" evidence="1">
    <location>
        <position position="493"/>
    </location>
    <ligand>
        <name>ATP</name>
        <dbReference type="ChEBI" id="CHEBI:30616"/>
    </ligand>
</feature>
<feature type="binding site" evidence="1">
    <location>
        <position position="530"/>
    </location>
    <ligand>
        <name>ATP</name>
        <dbReference type="ChEBI" id="CHEBI:30616"/>
    </ligand>
</feature>
<feature type="binding site" evidence="1">
    <location>
        <position position="531"/>
    </location>
    <ligand>
        <name>Mg(2+)</name>
        <dbReference type="ChEBI" id="CHEBI:18420"/>
        <label>1</label>
    </ligand>
</feature>
<feature type="binding site" evidence="1">
    <location>
        <position position="533"/>
    </location>
    <ligand>
        <name>substrate</name>
    </ligand>
</feature>
<evidence type="ECO:0000255" key="1">
    <source>
        <dbReference type="HAMAP-Rule" id="MF_00420"/>
    </source>
</evidence>
<sequence>MIPNTPSITPELVAEHGLKPDEYQRFVELIGREPTITELGIVSAMWNEHCSYKSSKVWLRTLPTKGPRVIQGPGENAGVVDIGDGLAVVFKMESHNHPSFIEPYQGAGTGVGGILRDVFTMGARPIAALNALRFGDPHHPRTRRLLAGVVAGIGGYGNSFGVPTVGGSVGFHERYNGNILVNAMAVGLAKTDEIFYAAAAGVGRSIVYLGSKTGRDGIHGATMASAEFGADAEEKRPTVQVGDPFAEKLLLEACLEIMQAGCVVAIQDMGAAGLTCSAVEMGAKGDLGVELDLNAVPCRETGMTAYEMMLSESQERMLMVIADGKEDQAEAIFRKWGLDFAIIGKTTDTLRFVVKHDGDVKADLPIKELGDEAPEYYRPFTETPPRPVLGPSDVNHAVSVADALERLIASPDLCSKRWVWEQYDHLILGNTVQRPGGDAAVVRVNEGPKALALTTDVTPRYCEADPFEGGKQAVAEAWRNLTAVGATPIAVTDNLNFGNPEKPEIMGQFVGCVKGIGAACEALDFPVVSGNVSLYNETNGQGILPTPTIGGVGLIDDVEQSMTLAFKAAGEAIFVVGKTDGWLGSSAYLYTVCDREDGAPPPVDLVAEKRNGDFVRGLIKDDFITAAHDVSDGGLLVAIAEMAMAGRIGASVDGVPAGMPAHSFWFGEDQARYVVTLPANQAAEMVRRAEAAGVPVTKLGKTGGDKITLANERPIFVEGLRDRHDSWLPIYMGAN</sequence>
<organism>
    <name type="scientific">Azorhizobium caulinodans (strain ATCC 43989 / DSM 5975 / JCM 20966 / LMG 6465 / NBRC 14845 / NCIMB 13405 / ORS 571)</name>
    <dbReference type="NCBI Taxonomy" id="438753"/>
    <lineage>
        <taxon>Bacteria</taxon>
        <taxon>Pseudomonadati</taxon>
        <taxon>Pseudomonadota</taxon>
        <taxon>Alphaproteobacteria</taxon>
        <taxon>Hyphomicrobiales</taxon>
        <taxon>Xanthobacteraceae</taxon>
        <taxon>Azorhizobium</taxon>
    </lineage>
</organism>
<dbReference type="EC" id="6.3.5.3" evidence="1"/>
<dbReference type="EMBL" id="AP009384">
    <property type="protein sequence ID" value="BAF88229.1"/>
    <property type="molecule type" value="Genomic_DNA"/>
</dbReference>
<dbReference type="RefSeq" id="WP_012170758.1">
    <property type="nucleotide sequence ID" value="NC_009937.1"/>
</dbReference>
<dbReference type="SMR" id="A8I8B0"/>
<dbReference type="STRING" id="438753.AZC_2231"/>
<dbReference type="KEGG" id="azc:AZC_2231"/>
<dbReference type="eggNOG" id="COG0046">
    <property type="taxonomic scope" value="Bacteria"/>
</dbReference>
<dbReference type="HOGENOM" id="CLU_003100_0_1_5"/>
<dbReference type="UniPathway" id="UPA00074">
    <property type="reaction ID" value="UER00128"/>
</dbReference>
<dbReference type="Proteomes" id="UP000000270">
    <property type="component" value="Chromosome"/>
</dbReference>
<dbReference type="GO" id="GO:0005737">
    <property type="term" value="C:cytoplasm"/>
    <property type="evidence" value="ECO:0007669"/>
    <property type="project" value="UniProtKB-SubCell"/>
</dbReference>
<dbReference type="GO" id="GO:0005524">
    <property type="term" value="F:ATP binding"/>
    <property type="evidence" value="ECO:0007669"/>
    <property type="project" value="UniProtKB-UniRule"/>
</dbReference>
<dbReference type="GO" id="GO:0000287">
    <property type="term" value="F:magnesium ion binding"/>
    <property type="evidence" value="ECO:0007669"/>
    <property type="project" value="UniProtKB-UniRule"/>
</dbReference>
<dbReference type="GO" id="GO:0004642">
    <property type="term" value="F:phosphoribosylformylglycinamidine synthase activity"/>
    <property type="evidence" value="ECO:0007669"/>
    <property type="project" value="UniProtKB-UniRule"/>
</dbReference>
<dbReference type="GO" id="GO:0006189">
    <property type="term" value="P:'de novo' IMP biosynthetic process"/>
    <property type="evidence" value="ECO:0007669"/>
    <property type="project" value="UniProtKB-UniRule"/>
</dbReference>
<dbReference type="CDD" id="cd02203">
    <property type="entry name" value="PurL_repeat1"/>
    <property type="match status" value="1"/>
</dbReference>
<dbReference type="CDD" id="cd02204">
    <property type="entry name" value="PurL_repeat2"/>
    <property type="match status" value="1"/>
</dbReference>
<dbReference type="FunFam" id="3.30.1330.10:FF:000004">
    <property type="entry name" value="Phosphoribosylformylglycinamidine synthase subunit PurL"/>
    <property type="match status" value="1"/>
</dbReference>
<dbReference type="Gene3D" id="3.90.650.10">
    <property type="entry name" value="PurM-like C-terminal domain"/>
    <property type="match status" value="2"/>
</dbReference>
<dbReference type="Gene3D" id="3.30.1330.10">
    <property type="entry name" value="PurM-like, N-terminal domain"/>
    <property type="match status" value="2"/>
</dbReference>
<dbReference type="HAMAP" id="MF_00420">
    <property type="entry name" value="PurL_2"/>
    <property type="match status" value="1"/>
</dbReference>
<dbReference type="InterPro" id="IPR010074">
    <property type="entry name" value="PRibForGlyAmidine_synth_PurL"/>
</dbReference>
<dbReference type="InterPro" id="IPR041609">
    <property type="entry name" value="PurL_linker"/>
</dbReference>
<dbReference type="InterPro" id="IPR010918">
    <property type="entry name" value="PurM-like_C_dom"/>
</dbReference>
<dbReference type="InterPro" id="IPR036676">
    <property type="entry name" value="PurM-like_C_sf"/>
</dbReference>
<dbReference type="InterPro" id="IPR016188">
    <property type="entry name" value="PurM-like_N"/>
</dbReference>
<dbReference type="InterPro" id="IPR036921">
    <property type="entry name" value="PurM-like_N_sf"/>
</dbReference>
<dbReference type="NCBIfam" id="TIGR01736">
    <property type="entry name" value="FGAM_synth_II"/>
    <property type="match status" value="1"/>
</dbReference>
<dbReference type="NCBIfam" id="NF002290">
    <property type="entry name" value="PRK01213.1"/>
    <property type="match status" value="1"/>
</dbReference>
<dbReference type="PANTHER" id="PTHR43555">
    <property type="entry name" value="PHOSPHORIBOSYLFORMYLGLYCINAMIDINE SYNTHASE SUBUNIT PURL"/>
    <property type="match status" value="1"/>
</dbReference>
<dbReference type="PANTHER" id="PTHR43555:SF1">
    <property type="entry name" value="PHOSPHORIBOSYLFORMYLGLYCINAMIDINE SYNTHASE SUBUNIT PURL"/>
    <property type="match status" value="1"/>
</dbReference>
<dbReference type="Pfam" id="PF00586">
    <property type="entry name" value="AIRS"/>
    <property type="match status" value="2"/>
</dbReference>
<dbReference type="Pfam" id="PF02769">
    <property type="entry name" value="AIRS_C"/>
    <property type="match status" value="2"/>
</dbReference>
<dbReference type="Pfam" id="PF18072">
    <property type="entry name" value="FGAR-AT_linker"/>
    <property type="match status" value="1"/>
</dbReference>
<dbReference type="PIRSF" id="PIRSF001587">
    <property type="entry name" value="FGAM_synthase_II"/>
    <property type="match status" value="1"/>
</dbReference>
<dbReference type="SUPFAM" id="SSF56042">
    <property type="entry name" value="PurM C-terminal domain-like"/>
    <property type="match status" value="2"/>
</dbReference>
<dbReference type="SUPFAM" id="SSF55326">
    <property type="entry name" value="PurM N-terminal domain-like"/>
    <property type="match status" value="2"/>
</dbReference>
<protein>
    <recommendedName>
        <fullName evidence="1">Phosphoribosylformylglycinamidine synthase subunit PurL</fullName>
        <shortName evidence="1">FGAM synthase</shortName>
        <ecNumber evidence="1">6.3.5.3</ecNumber>
    </recommendedName>
    <alternativeName>
        <fullName evidence="1">Formylglycinamide ribonucleotide amidotransferase subunit II</fullName>
        <shortName evidence="1">FGAR amidotransferase II</shortName>
        <shortName evidence="1">FGAR-AT II</shortName>
    </alternativeName>
    <alternativeName>
        <fullName evidence="1">Glutamine amidotransferase PurL</fullName>
    </alternativeName>
    <alternativeName>
        <fullName evidence="1">Phosphoribosylformylglycinamidine synthase subunit II</fullName>
    </alternativeName>
</protein>
<comment type="function">
    <text evidence="1">Part of the phosphoribosylformylglycinamidine synthase complex involved in the purines biosynthetic pathway. Catalyzes the ATP-dependent conversion of formylglycinamide ribonucleotide (FGAR) and glutamine to yield formylglycinamidine ribonucleotide (FGAM) and glutamate. The FGAM synthase complex is composed of three subunits. PurQ produces an ammonia molecule by converting glutamine to glutamate. PurL transfers the ammonia molecule to FGAR to form FGAM in an ATP-dependent manner. PurS interacts with PurQ and PurL and is thought to assist in the transfer of the ammonia molecule from PurQ to PurL.</text>
</comment>
<comment type="catalytic activity">
    <reaction evidence="1">
        <text>N(2)-formyl-N(1)-(5-phospho-beta-D-ribosyl)glycinamide + L-glutamine + ATP + H2O = 2-formamido-N(1)-(5-O-phospho-beta-D-ribosyl)acetamidine + L-glutamate + ADP + phosphate + H(+)</text>
        <dbReference type="Rhea" id="RHEA:17129"/>
        <dbReference type="ChEBI" id="CHEBI:15377"/>
        <dbReference type="ChEBI" id="CHEBI:15378"/>
        <dbReference type="ChEBI" id="CHEBI:29985"/>
        <dbReference type="ChEBI" id="CHEBI:30616"/>
        <dbReference type="ChEBI" id="CHEBI:43474"/>
        <dbReference type="ChEBI" id="CHEBI:58359"/>
        <dbReference type="ChEBI" id="CHEBI:147286"/>
        <dbReference type="ChEBI" id="CHEBI:147287"/>
        <dbReference type="ChEBI" id="CHEBI:456216"/>
        <dbReference type="EC" id="6.3.5.3"/>
    </reaction>
</comment>
<comment type="pathway">
    <text evidence="1">Purine metabolism; IMP biosynthesis via de novo pathway; 5-amino-1-(5-phospho-D-ribosyl)imidazole from N(2)-formyl-N(1)-(5-phospho-D-ribosyl)glycinamide: step 1/2.</text>
</comment>
<comment type="subunit">
    <text evidence="1">Monomer. Part of the FGAM synthase complex composed of 1 PurL, 1 PurQ and 2 PurS subunits.</text>
</comment>
<comment type="subcellular location">
    <subcellularLocation>
        <location evidence="1">Cytoplasm</location>
    </subcellularLocation>
</comment>
<comment type="similarity">
    <text evidence="1">Belongs to the FGAMS family.</text>
</comment>
<keyword id="KW-0067">ATP-binding</keyword>
<keyword id="KW-0963">Cytoplasm</keyword>
<keyword id="KW-0436">Ligase</keyword>
<keyword id="KW-0460">Magnesium</keyword>
<keyword id="KW-0479">Metal-binding</keyword>
<keyword id="KW-0547">Nucleotide-binding</keyword>
<keyword id="KW-0658">Purine biosynthesis</keyword>
<keyword id="KW-1185">Reference proteome</keyword>
<name>PURL_AZOC5</name>
<reference key="1">
    <citation type="submission" date="2007-04" db="EMBL/GenBank/DDBJ databases">
        <title>Complete genome sequence of the nitrogen-fixing bacterium Azorhizobium caulinodans ORS571.</title>
        <authorList>
            <person name="Lee K.B."/>
            <person name="Backer P.D."/>
            <person name="Aono T."/>
            <person name="Liu C.T."/>
            <person name="Suzuki S."/>
            <person name="Suzuki T."/>
            <person name="Kaneko T."/>
            <person name="Yamada M."/>
            <person name="Tabata S."/>
            <person name="Kupfer D.M."/>
            <person name="Najar F.Z."/>
            <person name="Wiley G.B."/>
            <person name="Roe B."/>
            <person name="Binnewies T."/>
            <person name="Ussery D."/>
            <person name="Vereecke D."/>
            <person name="Gevers D."/>
            <person name="Holsters M."/>
            <person name="Oyaizu H."/>
        </authorList>
    </citation>
    <scope>NUCLEOTIDE SEQUENCE [LARGE SCALE GENOMIC DNA]</scope>
    <source>
        <strain>ATCC 43989 / DSM 5975 / JCM 20966 / LMG 6465 / NBRC 14845 / NCIMB 13405 / ORS 571</strain>
    </source>
</reference>
<proteinExistence type="inferred from homology"/>
<gene>
    <name evidence="1" type="primary">purL</name>
    <name type="ordered locus">AZC_2231</name>
</gene>
<accession>A8I8B0</accession>